<proteinExistence type="evidence at protein level"/>
<sequence length="511" mass="57482">MKCLLYLAFLFIGVNCKFTIVFPHNQKGNWKNVPSNYHYCPSSSDLNWHNDLIGTAIQVKMPKSHKAIQADGWMCHASKWVTTCDFRWYGPKYITQSIRSFTPSVEQCKESIEQTKQGTWLNPGFPPQSCGYATVTDAEAVIVQVTPHHVLVDEYTGEWVDSQFINGKCSNYICPTVHNSTTWHSDYKVKGLCDSNLISMDITFFSEDGELSSLGKEGTGFRSNYFAYETGGKACKMQYCKHWGVRLPSGVWFEMADKDLFAAARFPECPEGSSISAPSQTSVDVSLIQDVERILDYSLCQETWSKIRAGLPISPVDLSYLAPKNPGTGPAFTIINGTLKYFETRYIRVDIAAPILSRMVGMISGTTTERELWDDWAPYEDVEIGPNGVLRTSSGYKFPLYMIGHGMLDSDLHLSSKAQVFEHPHIQDAASQLPDDESLFFGDTGLSKNPIELVEGWFSSWKSSIASFFFIIGLIIGLFLVLRVGIHLCIKLKHTKKRQIYTDIEMNRLGK</sequence>
<gene>
    <name type="primary">G</name>
</gene>
<organismHost>
    <name type="scientific">Aedes</name>
    <dbReference type="NCBI Taxonomy" id="7158"/>
</organismHost>
<organismHost>
    <name type="scientific">Bos taurus</name>
    <name type="common">Bovine</name>
    <dbReference type="NCBI Taxonomy" id="9913"/>
</organismHost>
<organismHost>
    <name type="scientific">Culicoides</name>
    <dbReference type="NCBI Taxonomy" id="58271"/>
</organismHost>
<organismHost>
    <name type="scientific">Equus asinus</name>
    <name type="common">Donkey</name>
    <name type="synonym">Equus africanus asinus</name>
    <dbReference type="NCBI Taxonomy" id="9793"/>
</organismHost>
<organismHost>
    <name type="scientific">Equus caballus</name>
    <name type="common">Horse</name>
    <dbReference type="NCBI Taxonomy" id="9796"/>
</organismHost>
<organismHost>
    <name type="scientific">Homo sapiens</name>
    <name type="common">Human</name>
    <dbReference type="NCBI Taxonomy" id="9606"/>
</organismHost>
<organismHost>
    <name type="scientific">Lutzomyia</name>
    <dbReference type="NCBI Taxonomy" id="252607"/>
</organismHost>
<organismHost>
    <name type="scientific">Musca domestica</name>
    <name type="common">House fly</name>
    <dbReference type="NCBI Taxonomy" id="7370"/>
</organismHost>
<organismHost>
    <name type="scientific">Simuliidae</name>
    <name type="common">black flies</name>
    <dbReference type="NCBI Taxonomy" id="7190"/>
</organismHost>
<organismHost>
    <name type="scientific">Sus scrofa</name>
    <name type="common">Pig</name>
    <dbReference type="NCBI Taxonomy" id="9823"/>
</organismHost>
<feature type="signal peptide">
    <location>
        <begin position="1"/>
        <end position="16"/>
    </location>
</feature>
<feature type="chain" id="PRO_0000041005" description="Glycoprotein">
    <location>
        <begin position="17"/>
        <end position="511"/>
    </location>
</feature>
<feature type="topological domain" description="Virion surface" evidence="3">
    <location>
        <begin position="17"/>
        <end position="467"/>
    </location>
</feature>
<feature type="transmembrane region" description="Helical" evidence="3">
    <location>
        <begin position="468"/>
        <end position="488"/>
    </location>
</feature>
<feature type="topological domain" description="Intravirion" evidence="3">
    <location>
        <begin position="489"/>
        <end position="511"/>
    </location>
</feature>
<feature type="region of interest" description="Trimerization" evidence="2">
    <location>
        <begin position="18"/>
        <end position="35"/>
    </location>
</feature>
<feature type="region of interest" description="Fusion peptide" evidence="2">
    <location>
        <begin position="53"/>
        <end position="172"/>
    </location>
</feature>
<feature type="region of interest" description="Trimerization" evidence="2">
    <location>
        <begin position="259"/>
        <end position="309"/>
    </location>
</feature>
<feature type="region of interest" description="Trimerization" evidence="2">
    <location>
        <begin position="383"/>
        <end position="405"/>
    </location>
</feature>
<feature type="short sequence motif" description="basolateral targeting ex vivo">
    <location>
        <begin position="496"/>
        <end position="506"/>
    </location>
</feature>
<feature type="site" description="Involved in the interaction with host LDL receptor" evidence="2">
    <location>
        <position position="63"/>
    </location>
</feature>
<feature type="site" description="pH sensor in the pre-fusion state" evidence="2">
    <location>
        <position position="76"/>
    </location>
</feature>
<feature type="site" description="pH sensor in the pre-fusion state" evidence="2">
    <location>
        <position position="178"/>
    </location>
</feature>
<feature type="site" description="Involved in the interaction with host LDL receptor" evidence="2">
    <location>
        <position position="370"/>
    </location>
</feature>
<feature type="site" description="pH sensor in the pre-fusion state" evidence="2">
    <location>
        <position position="423"/>
    </location>
</feature>
<feature type="lipid moiety-binding region" description="S-palmitoyl cysteine; by host" evidence="11">
    <location>
        <position position="489"/>
    </location>
</feature>
<feature type="glycosylation site" description="N-linked (GlcNAc...) asparagine; by host" evidence="3">
    <location>
        <position position="179"/>
    </location>
</feature>
<feature type="glycosylation site" description="N-linked (GlcNAc...) asparagine; by host" evidence="3">
    <location>
        <position position="336"/>
    </location>
</feature>
<feature type="disulfide bond" evidence="1">
    <location>
        <begin position="40"/>
        <end position="300"/>
    </location>
</feature>
<feature type="disulfide bond" evidence="1">
    <location>
        <begin position="75"/>
        <end position="108"/>
    </location>
</feature>
<feature type="disulfide bond" evidence="1">
    <location>
        <begin position="84"/>
        <end position="130"/>
    </location>
</feature>
<feature type="disulfide bond" evidence="1">
    <location>
        <begin position="169"/>
        <end position="174"/>
    </location>
</feature>
<feature type="disulfide bond" evidence="1">
    <location>
        <begin position="193"/>
        <end position="240"/>
    </location>
</feature>
<feature type="disulfide bond" evidence="1">
    <location>
        <begin position="235"/>
        <end position="269"/>
    </location>
</feature>
<feature type="mutagenesis site" description="Complete loss of palmitoylation." evidence="11">
    <original>C</original>
    <variation>S</variation>
    <location>
        <position position="489"/>
    </location>
</feature>
<feature type="mutagenesis site" description="No effect on basolateral targeting ex vivo." evidence="13">
    <original>K</original>
    <variation>A</variation>
    <location>
        <position position="496"/>
    </location>
</feature>
<feature type="mutagenesis site" description="No effect on basolateral targeting ex vivo." evidence="13">
    <original>K</original>
    <variation>A</variation>
    <location>
        <position position="497"/>
    </location>
</feature>
<feature type="mutagenesis site" description="No effect on basolateral targeting ex vivo." evidence="13">
    <original>R</original>
    <variation>A</variation>
    <location>
        <position position="498"/>
    </location>
</feature>
<feature type="mutagenesis site" description="No effect on basolateral targeting ex vivo." evidence="13">
    <original>Q</original>
    <variation>A</variation>
    <location>
        <position position="499"/>
    </location>
</feature>
<feature type="mutagenesis site" description="No effect on basolateral targeting ex vivo." evidence="13">
    <original>I</original>
    <variation>A</variation>
    <location>
        <position position="500"/>
    </location>
</feature>
<feature type="mutagenesis site" description="Complete loss of basolateral targeting ex vivo." evidence="13">
    <original>Y</original>
    <variation>A</variation>
    <location>
        <position position="501"/>
    </location>
</feature>
<feature type="mutagenesis site" description="No effect on basolateral targeting ex vivo." evidence="13">
    <original>T</original>
    <variation>A</variation>
    <location>
        <position position="502"/>
    </location>
</feature>
<feature type="mutagenesis site" description="No effect on basolateral targeting ex vivo." evidence="13">
    <original>D</original>
    <variation>A</variation>
    <location>
        <position position="503"/>
    </location>
</feature>
<feature type="mutagenesis site" description="Complete loss of basolateral targeting ex vivo." evidence="13">
    <original>I</original>
    <variation>A</variation>
    <location>
        <position position="504"/>
    </location>
</feature>
<feature type="mutagenesis site" description="No effect on basolateral targeting ex vivo." evidence="13">
    <original>E</original>
    <variation>A</variation>
    <location>
        <position position="505"/>
    </location>
</feature>
<feature type="mutagenesis site" description="No effect on basolateral targeting ex vivo." evidence="13">
    <original>M</original>
    <variation>A</variation>
    <location>
        <position position="506"/>
    </location>
</feature>
<feature type="turn" evidence="16">
    <location>
        <begin position="504"/>
        <end position="506"/>
    </location>
</feature>
<comment type="function">
    <text evidence="6 7 8 9">Attaches the virus to host LDL receptors, inducing clathrin-dependent endocytosis of the virion (PubMed:20941355, PubMed:23589850). In the endosome, the acidic pH induces conformational changes in the glycoprotein trimer, which trigger fusion between virus and endosomal membrane (PubMed:20921141, PubMed:22383886).</text>
</comment>
<comment type="subunit">
    <text evidence="9 10">Homotrimer (PubMed:36216930). Interacts with host LDL at target cell surface (PubMed:23589850).</text>
</comment>
<comment type="subcellular location">
    <subcellularLocation>
        <location evidence="5 10 12">Virion membrane</location>
        <topology evidence="12">Single-pass type I membrane protein</topology>
    </subcellularLocation>
    <subcellularLocation>
        <location evidence="12">Host membrane</location>
        <topology evidence="12">Single-pass type I membrane protein</topology>
    </subcellularLocation>
</comment>
<comment type="PTM">
    <text evidence="11">Glycosylated by host. Palmitoylated by host.</text>
</comment>
<comment type="biotechnology">
    <text evidence="4">Used to pseudotype many virus-like particles like lentiviral vector, because of its broad spectrum of host cell tropism. Also used in viral vectors studies in cancer therapy.</text>
</comment>
<comment type="similarity">
    <text evidence="14">Belongs to the vesiculovirus glycoprotein family.</text>
</comment>
<reference key="1">
    <citation type="journal article" date="1981" name="J. Virol.">
        <title>Nucleotide sequences of the mRNA's encoding the vesicular stomatitis virus G and M proteins determined from cDNA clones containing the complete coding regions.</title>
        <authorList>
            <person name="Rose J.K."/>
            <person name="Gallione C.J."/>
        </authorList>
    </citation>
    <scope>NUCLEOTIDE SEQUENCE [GENOMIC RNA]</scope>
</reference>
<reference key="2">
    <citation type="journal article" date="1990" name="J. Virol.">
        <title>Polymerase errors accumulating during natural evolution of the glycoprotein gene of vesicular stomatitis virus Indiana serotype isolates.</title>
        <authorList>
            <person name="Bilsel P.A."/>
            <person name="Nichol S.T."/>
        </authorList>
    </citation>
    <scope>NUCLEOTIDE SEQUENCE [GENOMIC RNA]</scope>
    <source>
        <strain>San Juan 56-NM-B</strain>
    </source>
</reference>
<reference key="3">
    <citation type="journal article" date="1984" name="Proc. Natl. Acad. Sci. U.S.A.">
        <title>The presence of cysteine in the cytoplasmic domain of the vesicular stomatitis virus glycoprotein is required for palmitate addition.</title>
        <authorList>
            <person name="Rose J.K."/>
            <person name="Adams G.A."/>
            <person name="Gallione C.J."/>
        </authorList>
    </citation>
    <scope>PALMITOYLATION AT CYS-489</scope>
    <scope>MUTAGENESIS OF CYS-489</scope>
</reference>
<reference key="4">
    <citation type="journal article" date="1991" name="J. Virol.">
        <title>Intracellular distribution of input vesicular stomatitis virus proteins after uncoating.</title>
        <authorList>
            <person name="Rigaut K.D."/>
            <person name="Birk D.E."/>
            <person name="Lenard J."/>
        </authorList>
    </citation>
    <scope>SUBCELLULAR LOCATION</scope>
</reference>
<reference key="5">
    <citation type="journal article" date="1993" name="J. Cell Sci. Suppl.">
        <title>Membrane traffic in polarized neurons in culture.</title>
        <authorList>
            <person name="de Hoop M.J."/>
            <person name="Dotti C.G."/>
        </authorList>
    </citation>
    <scope>SUBCELLULAR LOCATION</scope>
</reference>
<reference key="6">
    <citation type="journal article" date="1994" name="J. Biol. Chem.">
        <title>The basolateral targeting signal in the cytoplasmic domain of glycoprotein G from vesicular stomatitis virus resembles a variety of intracellular targeting motifs related by primary sequence but having diverse targeting activities.</title>
        <authorList>
            <person name="Thomas D.C."/>
            <person name="Roth M.G."/>
        </authorList>
    </citation>
    <scope>MUTAGENESIS OF LYS-496; LYS-497; ARG-498; GLN-499; ILE-500; TYR-501; THR-502; ASP-503; ILE-504; GLU-505 AND MET-506</scope>
</reference>
<reference key="7">
    <citation type="journal article" date="2002" name="J. Virol.">
        <title>Relative neurotropism of a recombinant rhabdovirus expressing a green fluorescent envelope glycoprotein.</title>
        <authorList>
            <person name="van den Pol A.N."/>
            <person name="Dalton K.P."/>
            <person name="Rose J.K."/>
        </authorList>
    </citation>
    <scope>TROPISM</scope>
</reference>
<reference key="8">
    <citation type="journal article" date="2005" name="Curr. Gene Ther.">
        <title>Altering the tropism of lentiviral vectors through pseudotyping.</title>
        <authorList>
            <person name="Cronin J."/>
            <person name="Zhang X.Y."/>
            <person name="Reiser J."/>
        </authorList>
    </citation>
    <scope>BIOTECHNOLOGY</scope>
</reference>
<reference key="9">
    <citation type="journal article" date="2010" name="PLoS Pathog.">
        <title>The length of vesicular stomatitis virus particles dictates a need for actin assembly during clathrin-dependent endocytosis.</title>
        <authorList>
            <person name="Cureton D.K."/>
            <person name="Massol R.H."/>
            <person name="Whelan S.P."/>
            <person name="Kirchhausen T."/>
        </authorList>
    </citation>
    <scope>FUNCTION</scope>
</reference>
<reference key="10">
    <citation type="journal article" date="2010" name="J. Cell Biol.">
        <title>Distinct structural rearrangements of the VSV glycoprotein drive membrane fusion.</title>
        <authorList>
            <person name="Libersou S."/>
            <person name="Albertini A.A."/>
            <person name="Ouldali M."/>
            <person name="Maury V."/>
            <person name="Maheu C."/>
            <person name="Raux H."/>
            <person name="de Haas F."/>
            <person name="Roche S."/>
            <person name="Gaudin Y."/>
            <person name="Lepault J."/>
        </authorList>
    </citation>
    <scope>FUNCTION</scope>
    <source>
        <strain>Orsay</strain>
    </source>
</reference>
<reference key="11">
    <citation type="journal article" date="2012" name="PLoS Pathog.">
        <title>Characterization of monomeric intermediates during VSV glycoprotein structural transition.</title>
        <authorList>
            <person name="Albertini A.A."/>
            <person name="Merigoux C."/>
            <person name="Libersou S."/>
            <person name="Madiona K."/>
            <person name="Bressanelli S."/>
            <person name="Roche S."/>
            <person name="Lepault J."/>
            <person name="Melki R."/>
            <person name="Vachette P."/>
            <person name="Gaudin Y."/>
        </authorList>
    </citation>
    <scope>FUNCTION</scope>
</reference>
<reference key="12">
    <citation type="journal article" date="2013" name="Proc. Natl. Acad. Sci. U.S.A.">
        <title>LDL receptor and its family members serve as the cellular receptors for vesicular stomatitis virus.</title>
        <authorList>
            <person name="Finkelshtein D."/>
            <person name="Werman A."/>
            <person name="Novick D."/>
            <person name="Barak S."/>
            <person name="Rubinstein M."/>
        </authorList>
    </citation>
    <scope>FUNCTION</scope>
    <scope>INTERACTION WITH HOST LDLR</scope>
</reference>
<reference key="13">
    <citation type="journal article" date="2022" name="Nat. Commun.">
        <title>Atomic model of vesicular stomatitis virus and mechanism of assembly.</title>
        <authorList>
            <person name="Zhou K."/>
            <person name="Si Z."/>
            <person name="Ge P."/>
            <person name="Tsao J."/>
            <person name="Luo M."/>
            <person name="Zhou Z.H."/>
        </authorList>
    </citation>
    <scope>SUBUNIT</scope>
    <scope>FUNCTION</scope>
    <scope>SUBCELLULAR LOCATION</scope>
</reference>
<reference evidence="15" key="14">
    <citation type="journal article" date="2008" name="EMBO J.">
        <title>Structural basis of cargo membrane protein discrimination by the human COPII coat machinery.</title>
        <authorList>
            <person name="Mancias J.D."/>
            <person name="Goldberg J."/>
        </authorList>
    </citation>
    <scope>X-RAY CRYSTALLOGRAPHY (2.70 ANGSTROMS) OF 499-508</scope>
</reference>
<evidence type="ECO:0000250" key="1"/>
<evidence type="ECO:0000250" key="2">
    <source>
        <dbReference type="UniProtKB" id="P0C2X0"/>
    </source>
</evidence>
<evidence type="ECO:0000255" key="3"/>
<evidence type="ECO:0000269" key="4">
    <source>
    </source>
</evidence>
<evidence type="ECO:0000269" key="5">
    <source>
    </source>
</evidence>
<evidence type="ECO:0000269" key="6">
    <source>
    </source>
</evidence>
<evidence type="ECO:0000269" key="7">
    <source>
    </source>
</evidence>
<evidence type="ECO:0000269" key="8">
    <source>
    </source>
</evidence>
<evidence type="ECO:0000269" key="9">
    <source>
    </source>
</evidence>
<evidence type="ECO:0000269" key="10">
    <source>
    </source>
</evidence>
<evidence type="ECO:0000269" key="11">
    <source>
    </source>
</evidence>
<evidence type="ECO:0000269" key="12">
    <source>
    </source>
</evidence>
<evidence type="ECO:0000269" key="13">
    <source>
    </source>
</evidence>
<evidence type="ECO:0000305" key="14"/>
<evidence type="ECO:0007744" key="15">
    <source>
        <dbReference type="PDB" id="3EGD"/>
    </source>
</evidence>
<evidence type="ECO:0007829" key="16">
    <source>
        <dbReference type="PDB" id="3EGD"/>
    </source>
</evidence>
<protein>
    <recommendedName>
        <fullName>Glycoprotein</fullName>
    </recommendedName>
</protein>
<name>GLYCO_VSIVA</name>
<dbReference type="EMBL" id="J02428">
    <property type="protein sequence ID" value="AAA48370.1"/>
    <property type="molecule type" value="Genomic_RNA"/>
</dbReference>
<dbReference type="EMBL" id="M35219">
    <property type="protein sequence ID" value="AAA48389.1"/>
    <property type="molecule type" value="Genomic_RNA"/>
</dbReference>
<dbReference type="RefSeq" id="NP_041715.1">
    <property type="nucleotide sequence ID" value="NC_001560.1"/>
</dbReference>
<dbReference type="PDB" id="3EGD">
    <property type="method" value="X-ray"/>
    <property type="resolution" value="2.70 A"/>
    <property type="chains" value="D=499-508"/>
</dbReference>
<dbReference type="PDBsum" id="3EGD"/>
<dbReference type="SMR" id="P03522"/>
<dbReference type="ELM" id="P03522"/>
<dbReference type="ChEMBL" id="CHEMBL4295565"/>
<dbReference type="GlyCosmos" id="P03522">
    <property type="glycosylation" value="2 sites, No reported glycans"/>
</dbReference>
<dbReference type="KEGG" id="vg:1489834"/>
<dbReference type="EvolutionaryTrace" id="P03522"/>
<dbReference type="Proteomes" id="UP000002327">
    <property type="component" value="Segment"/>
</dbReference>
<dbReference type="GO" id="GO:0033644">
    <property type="term" value="C:host cell membrane"/>
    <property type="evidence" value="ECO:0007669"/>
    <property type="project" value="UniProtKB-SubCell"/>
</dbReference>
<dbReference type="GO" id="GO:0016020">
    <property type="term" value="C:membrane"/>
    <property type="evidence" value="ECO:0007669"/>
    <property type="project" value="UniProtKB-KW"/>
</dbReference>
<dbReference type="GO" id="GO:0019031">
    <property type="term" value="C:viral envelope"/>
    <property type="evidence" value="ECO:0007669"/>
    <property type="project" value="UniProtKB-KW"/>
</dbReference>
<dbReference type="GO" id="GO:0055036">
    <property type="term" value="C:virion membrane"/>
    <property type="evidence" value="ECO:0007669"/>
    <property type="project" value="UniProtKB-SubCell"/>
</dbReference>
<dbReference type="GO" id="GO:0075512">
    <property type="term" value="P:clathrin-dependent endocytosis of virus by host cell"/>
    <property type="evidence" value="ECO:0007669"/>
    <property type="project" value="UniProtKB-KW"/>
</dbReference>
<dbReference type="GO" id="GO:0098670">
    <property type="term" value="P:entry receptor-mediated virion attachment to host cell"/>
    <property type="evidence" value="ECO:0007669"/>
    <property type="project" value="UniProtKB-KW"/>
</dbReference>
<dbReference type="GO" id="GO:0039654">
    <property type="term" value="P:fusion of virus membrane with host endosome membrane"/>
    <property type="evidence" value="ECO:0007669"/>
    <property type="project" value="UniProtKB-KW"/>
</dbReference>
<dbReference type="Gene3D" id="2.30.29.130">
    <property type="match status" value="2"/>
</dbReference>
<dbReference type="Gene3D" id="2.30.30.640">
    <property type="match status" value="2"/>
</dbReference>
<dbReference type="InterPro" id="IPR055447">
    <property type="entry name" value="Rhabdo_glycop_CD"/>
</dbReference>
<dbReference type="InterPro" id="IPR001903">
    <property type="entry name" value="Rhabdo_glycop_FD"/>
</dbReference>
<dbReference type="Pfam" id="PF24833">
    <property type="entry name" value="Rhabdo_glycop_CD"/>
    <property type="match status" value="1"/>
</dbReference>
<dbReference type="Pfam" id="PF00974">
    <property type="entry name" value="Rhabdo_glycop_FD"/>
    <property type="match status" value="1"/>
</dbReference>
<dbReference type="SUPFAM" id="SSF161008">
    <property type="entry name" value="Viral glycoprotein ectodomain-like"/>
    <property type="match status" value="1"/>
</dbReference>
<keyword id="KW-0002">3D-structure</keyword>
<keyword id="KW-1165">Clathrin-mediated endocytosis of virus by host</keyword>
<keyword id="KW-1015">Disulfide bond</keyword>
<keyword id="KW-1170">Fusion of virus membrane with host endosomal membrane</keyword>
<keyword id="KW-1168">Fusion of virus membrane with host membrane</keyword>
<keyword id="KW-0325">Glycoprotein</keyword>
<keyword id="KW-1043">Host membrane</keyword>
<keyword id="KW-0945">Host-virus interaction</keyword>
<keyword id="KW-0449">Lipoprotein</keyword>
<keyword id="KW-0472">Membrane</keyword>
<keyword id="KW-0564">Palmitate</keyword>
<keyword id="KW-1185">Reference proteome</keyword>
<keyword id="KW-0732">Signal</keyword>
<keyword id="KW-0812">Transmembrane</keyword>
<keyword id="KW-1133">Transmembrane helix</keyword>
<keyword id="KW-1161">Viral attachment to host cell</keyword>
<keyword id="KW-1234">Viral attachment to host entry receptor</keyword>
<keyword id="KW-0261">Viral envelope protein</keyword>
<keyword id="KW-1162">Viral penetration into host cytoplasm</keyword>
<keyword id="KW-0946">Virion</keyword>
<keyword id="KW-1164">Virus endocytosis by host</keyword>
<keyword id="KW-1160">Virus entry into host cell</keyword>
<accession>P03522</accession>
<organism>
    <name type="scientific">Vesicular stomatitis Indiana virus (strain San Juan)</name>
    <name type="common">VSIV</name>
    <dbReference type="NCBI Taxonomy" id="11285"/>
    <lineage>
        <taxon>Viruses</taxon>
        <taxon>Riboviria</taxon>
        <taxon>Orthornavirae</taxon>
        <taxon>Negarnaviricota</taxon>
        <taxon>Haploviricotina</taxon>
        <taxon>Monjiviricetes</taxon>
        <taxon>Mononegavirales</taxon>
        <taxon>Rhabdoviridae</taxon>
        <taxon>Alpharhabdovirinae</taxon>
        <taxon>Vesiculovirus</taxon>
        <taxon>Vesiculovirus indiana</taxon>
    </lineage>
</organism>